<keyword id="KW-1185">Reference proteome</keyword>
<feature type="chain" id="PRO_1000069293" description="UPF0502 protein CKO_01995">
    <location>
        <begin position="1"/>
        <end position="215"/>
    </location>
</feature>
<name>Y1995_CITK8</name>
<accession>A8AI08</accession>
<comment type="similarity">
    <text evidence="1">Belongs to the UPF0502 family.</text>
</comment>
<evidence type="ECO:0000255" key="1">
    <source>
        <dbReference type="HAMAP-Rule" id="MF_01584"/>
    </source>
</evidence>
<reference key="1">
    <citation type="submission" date="2007-08" db="EMBL/GenBank/DDBJ databases">
        <authorList>
            <consortium name="The Citrobacter koseri Genome Sequencing Project"/>
            <person name="McClelland M."/>
            <person name="Sanderson E.K."/>
            <person name="Porwollik S."/>
            <person name="Spieth J."/>
            <person name="Clifton W.S."/>
            <person name="Latreille P."/>
            <person name="Courtney L."/>
            <person name="Wang C."/>
            <person name="Pepin K."/>
            <person name="Bhonagiri V."/>
            <person name="Nash W."/>
            <person name="Johnson M."/>
            <person name="Thiruvilangam P."/>
            <person name="Wilson R."/>
        </authorList>
    </citation>
    <scope>NUCLEOTIDE SEQUENCE [LARGE SCALE GENOMIC DNA]</scope>
    <source>
        <strain>ATCC BAA-895 / CDC 4225-83 / SGSC4696</strain>
    </source>
</reference>
<sequence length="215" mass="23993">MKYELTATEARVIGCLLEKQVTTPEQYPLSVNGVVTASNQKTNREPVMNLSEHEVQEQLDNLVKRHFLRTVSGFGNRVTKYEQRFCNSEFGNLKLSPAEVALIATLLLRGAQTPGELRSRASRMYEFSDMAEVESTLEQLAARDDGPYVVRLAREPGKRESRYMHLFCGEVDEPVSSDDAPQAASGDLHARVEALEGEVAELKQRLDSLLAHLGD</sequence>
<organism>
    <name type="scientific">Citrobacter koseri (strain ATCC BAA-895 / CDC 4225-83 / SGSC4696)</name>
    <dbReference type="NCBI Taxonomy" id="290338"/>
    <lineage>
        <taxon>Bacteria</taxon>
        <taxon>Pseudomonadati</taxon>
        <taxon>Pseudomonadota</taxon>
        <taxon>Gammaproteobacteria</taxon>
        <taxon>Enterobacterales</taxon>
        <taxon>Enterobacteriaceae</taxon>
        <taxon>Citrobacter</taxon>
    </lineage>
</organism>
<dbReference type="EMBL" id="CP000822">
    <property type="protein sequence ID" value="ABV13121.1"/>
    <property type="molecule type" value="Genomic_DNA"/>
</dbReference>
<dbReference type="RefSeq" id="WP_012132857.1">
    <property type="nucleotide sequence ID" value="NC_009792.1"/>
</dbReference>
<dbReference type="SMR" id="A8AI08"/>
<dbReference type="STRING" id="290338.CKO_01995"/>
<dbReference type="GeneID" id="45135965"/>
<dbReference type="KEGG" id="cko:CKO_01995"/>
<dbReference type="HOGENOM" id="CLU_057831_2_0_6"/>
<dbReference type="OrthoDB" id="9784785at2"/>
<dbReference type="Proteomes" id="UP000008148">
    <property type="component" value="Chromosome"/>
</dbReference>
<dbReference type="FunFam" id="1.10.10.10:FF:000196">
    <property type="entry name" value="UPF0502 protein YceH"/>
    <property type="match status" value="1"/>
</dbReference>
<dbReference type="Gene3D" id="1.10.10.10">
    <property type="entry name" value="Winged helix-like DNA-binding domain superfamily/Winged helix DNA-binding domain"/>
    <property type="match status" value="2"/>
</dbReference>
<dbReference type="HAMAP" id="MF_01584">
    <property type="entry name" value="UPF0502"/>
    <property type="match status" value="1"/>
</dbReference>
<dbReference type="InterPro" id="IPR007432">
    <property type="entry name" value="DUF480"/>
</dbReference>
<dbReference type="InterPro" id="IPR036388">
    <property type="entry name" value="WH-like_DNA-bd_sf"/>
</dbReference>
<dbReference type="InterPro" id="IPR036390">
    <property type="entry name" value="WH_DNA-bd_sf"/>
</dbReference>
<dbReference type="NCBIfam" id="NF008413">
    <property type="entry name" value="PRK11239.1"/>
    <property type="match status" value="1"/>
</dbReference>
<dbReference type="PANTHER" id="PTHR38768">
    <property type="entry name" value="UPF0502 PROTEIN YCEH"/>
    <property type="match status" value="1"/>
</dbReference>
<dbReference type="PANTHER" id="PTHR38768:SF1">
    <property type="entry name" value="UPF0502 PROTEIN YCEH"/>
    <property type="match status" value="1"/>
</dbReference>
<dbReference type="Pfam" id="PF04337">
    <property type="entry name" value="DUF480"/>
    <property type="match status" value="1"/>
</dbReference>
<dbReference type="SUPFAM" id="SSF46785">
    <property type="entry name" value="Winged helix' DNA-binding domain"/>
    <property type="match status" value="2"/>
</dbReference>
<proteinExistence type="inferred from homology"/>
<gene>
    <name type="ordered locus">CKO_01995</name>
</gene>
<protein>
    <recommendedName>
        <fullName evidence="1">UPF0502 protein CKO_01995</fullName>
    </recommendedName>
</protein>